<keyword id="KW-1003">Cell membrane</keyword>
<keyword id="KW-0963">Cytoplasm</keyword>
<keyword id="KW-0968">Cytoplasmic vesicle</keyword>
<keyword id="KW-0206">Cytoskeleton</keyword>
<keyword id="KW-0967">Endosome</keyword>
<keyword id="KW-0333">Golgi apparatus</keyword>
<keyword id="KW-0342">GTP-binding</keyword>
<keyword id="KW-0449">Lipoprotein</keyword>
<keyword id="KW-0472">Membrane</keyword>
<keyword id="KW-0547">Nucleotide-binding</keyword>
<keyword id="KW-0636">Prenylation</keyword>
<keyword id="KW-0653">Protein transport</keyword>
<keyword id="KW-1185">Reference proteome</keyword>
<keyword id="KW-0813">Transport</keyword>
<protein>
    <recommendedName>
        <fullName evidence="1">Ras-related protein rab-11.1</fullName>
    </recommendedName>
    <alternativeName>
        <fullName evidence="15">Rab GTPase rab-11.1</fullName>
    </alternativeName>
</protein>
<reference evidence="18" key="1">
    <citation type="journal article" date="1998" name="Science">
        <title>Genome sequence of the nematode C. elegans: a platform for investigating biology.</title>
        <authorList>
            <consortium name="The C. elegans sequencing consortium"/>
        </authorList>
    </citation>
    <scope>NUCLEOTIDE SEQUENCE [LARGE SCALE GENOMIC DNA]</scope>
    <source>
        <strain evidence="17 18">Bristol N2</strain>
    </source>
</reference>
<reference evidence="16" key="2">
    <citation type="journal article" date="2012" name="PLoS ONE">
        <title>The C. elegans Rab family: Identification, classification and toolkit construction.</title>
        <authorList>
            <person name="Gallegos M.E."/>
            <person name="Balakrishnan S."/>
            <person name="Chandramouli P."/>
            <person name="Arora S."/>
            <person name="Azameera A."/>
            <person name="Babushekar A."/>
            <person name="Bargoma E."/>
            <person name="Bokhari A."/>
            <person name="Chava S.K."/>
            <person name="Das P."/>
            <person name="Desai M."/>
            <person name="Decena D."/>
            <person name="Saramma S.D."/>
            <person name="Dey B."/>
            <person name="Doss A.L."/>
            <person name="Gor N."/>
            <person name="Gudiputi L."/>
            <person name="Guo C."/>
            <person name="Hande S."/>
            <person name="Jensen M."/>
            <person name="Jones S."/>
            <person name="Jones N."/>
            <person name="Jorgens D."/>
            <person name="Karamchedu P."/>
            <person name="Kamrani K."/>
            <person name="Kolora L.D."/>
            <person name="Kristensen L."/>
            <person name="Kwan K."/>
            <person name="Lau H."/>
            <person name="Maharaj P."/>
            <person name="Mander N."/>
            <person name="Mangipudi K."/>
            <person name="Menakuru H."/>
            <person name="Mody V."/>
            <person name="Mohanty S."/>
            <person name="Mukkamala S."/>
            <person name="Mundra S.A."/>
            <person name="Nagaraju S."/>
            <person name="Narayanaswamy R."/>
            <person name="Ndungu-Case C."/>
            <person name="Noorbakhsh M."/>
            <person name="Patel J."/>
            <person name="Patel P."/>
            <person name="Pendem S.V."/>
            <person name="Ponakala A."/>
            <person name="Rath M."/>
            <person name="Robles M.C."/>
            <person name="Rokkam D."/>
            <person name="Roth C."/>
            <person name="Sasidharan P."/>
            <person name="Shah S."/>
            <person name="Tandon S."/>
            <person name="Suprai J."/>
            <person name="Truong T.Q."/>
            <person name="Uthayaruban R."/>
            <person name="Varma A."/>
            <person name="Ved U."/>
            <person name="Wang Z."/>
            <person name="Yu Z."/>
        </authorList>
    </citation>
    <scope>NUCLEOTIDE SEQUENCE [MRNA] OF 2-211</scope>
</reference>
<reference evidence="15" key="3">
    <citation type="journal article" date="2008" name="Curr. Biol.">
        <title>Regulated trafficking of the MSP/Eph receptor during oocyte meiotic maturation in C. elegans.</title>
        <authorList>
            <person name="Cheng H."/>
            <person name="Govindan J.A."/>
            <person name="Greenstein D."/>
        </authorList>
    </citation>
    <scope>FUNCTION</scope>
    <scope>SUBCELLULAR LOCATION</scope>
    <scope>TISSUE SPECIFICITY</scope>
    <scope>DISRUPTION PHENOTYPE</scope>
</reference>
<reference evidence="15" key="4">
    <citation type="journal article" date="2008" name="EMBO J.">
        <title>Regulation of endocytic recycling by C. elegans Rab35 and its regulator RME-4, a coated-pit protein.</title>
        <authorList>
            <person name="Sato M."/>
            <person name="Sato K."/>
            <person name="Liou W."/>
            <person name="Pant S."/>
            <person name="Harada A."/>
            <person name="Grant B.D."/>
        </authorList>
    </citation>
    <scope>FUNCTION</scope>
    <scope>DISRUPTION PHENOTYPE</scope>
</reference>
<reference evidence="15" key="5">
    <citation type="journal article" date="2008" name="J. Cell Sci.">
        <title>Rab11 is required for synchronous secretion of chondroitin proteoglycans after fertilization in Caenorhabditis elegans.</title>
        <authorList>
            <person name="Sato M."/>
            <person name="Grant B.D."/>
            <person name="Harada A."/>
            <person name="Sato K."/>
        </authorList>
    </citation>
    <scope>FUNCTION</scope>
    <scope>SUBCELLULAR LOCATION</scope>
    <scope>DISRUPTION PHENOTYPE</scope>
</reference>
<reference evidence="15" key="6">
    <citation type="journal article" date="2008" name="Mol. Biol. Cell">
        <title>RAB-11 permissively regulates spindle alignment by modulating metaphase microtubule dynamics in Caenorhabditis elegans early embryos.</title>
        <authorList>
            <person name="Zhang H."/>
            <person name="Squirrell J.M."/>
            <person name="White J.G."/>
        </authorList>
    </citation>
    <scope>FUNCTION</scope>
    <scope>SUBCELLULAR LOCATION</scope>
    <scope>DEVELOPMENTAL STAGE</scope>
    <scope>DISRUPTION PHENOTYPE</scope>
</reference>
<reference evidence="15" key="7">
    <citation type="journal article" date="2009" name="Mol. Biol. Cell">
        <title>RACK-1 directs dynactin-dependent RAB-11 endosomal recycling during mitosis in Caenorhabditis elegans.</title>
        <authorList>
            <person name="Ai E."/>
            <person name="Poole D.S."/>
            <person name="Skop A.R."/>
        </authorList>
    </citation>
    <scope>SUBCELLULAR LOCATION</scope>
</reference>
<reference evidence="15" key="8">
    <citation type="journal article" date="2010" name="Curr. Biol.">
        <title>A role for separase in the regulation of RAB-11-positive vesicles at the cleavage furrow and midbody.</title>
        <authorList>
            <person name="Bembenek J.N."/>
            <person name="White J.G."/>
            <person name="Zheng Y."/>
        </authorList>
    </citation>
    <scope>FUNCTION</scope>
    <scope>SUBCELLULAR LOCATION</scope>
    <scope>DEVELOPMENTAL STAGE</scope>
</reference>
<reference evidence="15" key="9">
    <citation type="journal article" date="2011" name="Cell Host Microbe">
        <title>RAB-5- and RAB-11-dependent vesicle-trafficking pathways are required for plasma membrane repair after attack by bacterial pore-forming toxin.</title>
        <authorList>
            <person name="Los F.C."/>
            <person name="Kao C.Y."/>
            <person name="Smitham J."/>
            <person name="McDonald K.L."/>
            <person name="Ha C."/>
            <person name="Peixoto C.A."/>
            <person name="Aroian R.V."/>
        </authorList>
    </citation>
    <scope>FUNCTION</scope>
    <scope>DISRUPTION PHENOTYPE</scope>
</reference>
<reference key="10">
    <citation type="journal article" date="2012" name="J. Cell Sci.">
        <title>Rab6 is required for the exocytosis of cortical granules and the recruitment of separase to the granules during the oocyte-to-embryo transition in Caenorhabditis elegans.</title>
        <authorList>
            <person name="Kimura K."/>
            <person name="Kimura A."/>
        </authorList>
    </citation>
    <scope>FUNCTION</scope>
    <scope>SUBCELLULAR LOCATION</scope>
    <scope>DISRUPTION PHENOTYPE</scope>
</reference>
<reference evidence="15" key="11">
    <citation type="journal article" date="2012" name="Nat. Cell Biol.">
        <title>Caenorhabditis elegans screen reveals role of PAR-5 in RAB-11-recycling endosome positioning and apicobasal cell polarity.</title>
        <authorList>
            <person name="Winter J.F."/>
            <person name="Hoepfner S."/>
            <person name="Korn K."/>
            <person name="Farnung B.O."/>
            <person name="Bradshaw C.R."/>
            <person name="Marsico G."/>
            <person name="Volkmer M."/>
            <person name="Habermann B."/>
            <person name="Zerial M."/>
        </authorList>
    </citation>
    <scope>SUBCELLULAR LOCATION</scope>
    <scope>DEVELOPMENTAL STAGE</scope>
</reference>
<reference evidence="15" key="12">
    <citation type="journal article" date="2014" name="Proc. Natl. Acad. Sci. U.S.A.">
        <title>The small GTPase RAB-11 directs polarized exocytosis of the intracellular pathogen N. parisii for fecal-oral transmission from C. elegans.</title>
        <authorList>
            <person name="Szumowski S.C."/>
            <person name="Botts M.R."/>
            <person name="Popovich J.J."/>
            <person name="Smelkinson M.G."/>
            <person name="Troemel E.R."/>
        </authorList>
    </citation>
    <scope>FUNCTION</scope>
    <scope>SUBCELLULAR LOCATION</scope>
    <scope>TISSUE SPECIFICITY</scope>
    <scope>DISRUPTION PHENOTYPE</scope>
</reference>
<reference evidence="15" key="13">
    <citation type="journal article" date="2015" name="Dev. Cell">
        <title>REI-1 is a guanine nucleotide exchange factor regulating RAB-11 localization and function in C. elegans embryos.</title>
        <authorList>
            <person name="Sakaguchi A."/>
            <person name="Sato M."/>
            <person name="Sato K."/>
            <person name="Gengyo-Ando K."/>
            <person name="Yorimitsu T."/>
            <person name="Nakai J."/>
            <person name="Hara T."/>
            <person name="Sato K."/>
            <person name="Sato K."/>
        </authorList>
    </citation>
    <scope>FUNCTION</scope>
    <scope>INTERACTION WITH REI-1 AND REI-2</scope>
    <scope>SUBCELLULAR LOCATION</scope>
    <scope>DEVELOPMENTAL STAGE</scope>
</reference>
<feature type="chain" id="PRO_0000435682" description="Ras-related protein rab-11.1" evidence="15">
    <location>
        <begin position="1"/>
        <end position="211"/>
    </location>
</feature>
<feature type="region of interest" description="Disordered" evidence="3">
    <location>
        <begin position="187"/>
        <end position="211"/>
    </location>
</feature>
<feature type="short sequence motif" description="Effector region" evidence="15">
    <location>
        <begin position="40"/>
        <end position="48"/>
    </location>
</feature>
<feature type="binding site" evidence="1">
    <location>
        <begin position="18"/>
        <end position="26"/>
    </location>
    <ligand>
        <name>GTP</name>
        <dbReference type="ChEBI" id="CHEBI:37565"/>
    </ligand>
</feature>
<feature type="binding site" evidence="1">
    <location>
        <begin position="66"/>
        <end position="70"/>
    </location>
    <ligand>
        <name>GTP</name>
        <dbReference type="ChEBI" id="CHEBI:37565"/>
    </ligand>
</feature>
<feature type="binding site" evidence="1">
    <location>
        <begin position="124"/>
        <end position="127"/>
    </location>
    <ligand>
        <name>GTP</name>
        <dbReference type="ChEBI" id="CHEBI:37565"/>
    </ligand>
</feature>
<feature type="binding site" evidence="1">
    <location>
        <begin position="154"/>
        <end position="156"/>
    </location>
    <ligand>
        <name>GTP</name>
        <dbReference type="ChEBI" id="CHEBI:37565"/>
    </ligand>
</feature>
<feature type="lipid moiety-binding region" description="S-geranylgeranyl cysteine" evidence="1">
    <location>
        <position position="208"/>
    </location>
</feature>
<feature type="lipid moiety-binding region" description="S-geranylgeranyl cysteine" evidence="1">
    <location>
        <position position="209"/>
    </location>
</feature>
<accession>O01803</accession>
<accession>I7EVK5</accession>
<gene>
    <name evidence="19" type="primary">rab-11.1</name>
    <name evidence="19" type="ORF">F53G12.1</name>
</gene>
<proteinExistence type="evidence at protein level"/>
<sequence>MGSRDDEYDYLFKVVLIGDSGVGKSNLLSRFTRNEFNLESKSTIGVEFATRSISVEGKTVKAQIWDTAGQERYRAITSAYYRGAVGALLVYDIAKHVTYENVERWLKELRDHADQNIVIMLVGNKSDLRHLRAVPTDEAKIYAERNQLSFIETSALDSTNVEAAFTNILTEIYKSVSNKHVGTDRQGYGGGSGTIIPSPASDPPKKQCCIP</sequence>
<evidence type="ECO:0000250" key="1">
    <source>
        <dbReference type="UniProtKB" id="P62491"/>
    </source>
</evidence>
<evidence type="ECO:0000255" key="2">
    <source>
        <dbReference type="RuleBase" id="RU003315"/>
    </source>
</evidence>
<evidence type="ECO:0000256" key="3">
    <source>
        <dbReference type="SAM" id="MobiDB-lite"/>
    </source>
</evidence>
<evidence type="ECO:0000269" key="4">
    <source>
    </source>
</evidence>
<evidence type="ECO:0000269" key="5">
    <source>
    </source>
</evidence>
<evidence type="ECO:0000269" key="6">
    <source>
    </source>
</evidence>
<evidence type="ECO:0000269" key="7">
    <source>
    </source>
</evidence>
<evidence type="ECO:0000269" key="8">
    <source>
    </source>
</evidence>
<evidence type="ECO:0000269" key="9">
    <source>
    </source>
</evidence>
<evidence type="ECO:0000269" key="10">
    <source>
    </source>
</evidence>
<evidence type="ECO:0000269" key="11">
    <source>
    </source>
</evidence>
<evidence type="ECO:0000269" key="12">
    <source>
    </source>
</evidence>
<evidence type="ECO:0000269" key="13">
    <source>
    </source>
</evidence>
<evidence type="ECO:0000269" key="14">
    <source>
    </source>
</evidence>
<evidence type="ECO:0000305" key="15"/>
<evidence type="ECO:0000312" key="16">
    <source>
        <dbReference type="EMBL" id="AFP33153.1"/>
    </source>
</evidence>
<evidence type="ECO:0000312" key="17">
    <source>
        <dbReference type="EMBL" id="CCD71701.1"/>
    </source>
</evidence>
<evidence type="ECO:0000312" key="18">
    <source>
        <dbReference type="Proteomes" id="UP000001940"/>
    </source>
</evidence>
<evidence type="ECO:0000312" key="19">
    <source>
        <dbReference type="WormBase" id="F53G12.1"/>
    </source>
</evidence>
<name>RB11A_CAEEL</name>
<dbReference type="EMBL" id="JQ235189">
    <property type="protein sequence ID" value="AFP33153.1"/>
    <property type="molecule type" value="mRNA"/>
</dbReference>
<dbReference type="EMBL" id="BX284601">
    <property type="protein sequence ID" value="CCD71701.1"/>
    <property type="molecule type" value="Genomic_DNA"/>
</dbReference>
<dbReference type="PIR" id="T29035">
    <property type="entry name" value="T29035"/>
</dbReference>
<dbReference type="RefSeq" id="NP_490675.1">
    <property type="nucleotide sequence ID" value="NM_058274.6"/>
</dbReference>
<dbReference type="SMR" id="O01803"/>
<dbReference type="DIP" id="DIP-24288N"/>
<dbReference type="FunCoup" id="O01803">
    <property type="interactions" value="3117"/>
</dbReference>
<dbReference type="IntAct" id="O01803">
    <property type="interactions" value="1"/>
</dbReference>
<dbReference type="STRING" id="6239.F53G12.1.2"/>
<dbReference type="PaxDb" id="6239-F53G12.1.1"/>
<dbReference type="PeptideAtlas" id="O01803"/>
<dbReference type="EnsemblMetazoa" id="F53G12.1.1">
    <property type="protein sequence ID" value="F53G12.1.1"/>
    <property type="gene ID" value="WBGene00004274"/>
</dbReference>
<dbReference type="GeneID" id="171601"/>
<dbReference type="KEGG" id="cel:CELE_F53G12.1"/>
<dbReference type="UCSC" id="F53G12.1">
    <property type="organism name" value="c. elegans"/>
</dbReference>
<dbReference type="AGR" id="WB:WBGene00004274"/>
<dbReference type="CTD" id="171601"/>
<dbReference type="WormBase" id="F53G12.1">
    <property type="protein sequence ID" value="CE11006"/>
    <property type="gene ID" value="WBGene00004274"/>
    <property type="gene designation" value="rab-11.1"/>
</dbReference>
<dbReference type="eggNOG" id="KOG0087">
    <property type="taxonomic scope" value="Eukaryota"/>
</dbReference>
<dbReference type="GeneTree" id="ENSGT00940000161659"/>
<dbReference type="HOGENOM" id="CLU_041217_23_0_1"/>
<dbReference type="InParanoid" id="O01803"/>
<dbReference type="OMA" id="ITAIYQM"/>
<dbReference type="OrthoDB" id="9989112at2759"/>
<dbReference type="PhylomeDB" id="O01803"/>
<dbReference type="Reactome" id="R-CEL-5620912">
    <property type="pathway name" value="Anchoring of the basal body to the plasma membrane"/>
</dbReference>
<dbReference type="Reactome" id="R-CEL-5620916">
    <property type="pathway name" value="VxPx cargo-targeting to cilium"/>
</dbReference>
<dbReference type="Reactome" id="R-CEL-8854214">
    <property type="pathway name" value="TBC/RABGAPs"/>
</dbReference>
<dbReference type="Reactome" id="R-CEL-8873719">
    <property type="pathway name" value="RAB geranylgeranylation"/>
</dbReference>
<dbReference type="PRO" id="PR:O01803"/>
<dbReference type="Proteomes" id="UP000001940">
    <property type="component" value="Chromosome I"/>
</dbReference>
<dbReference type="Bgee" id="WBGene00004274">
    <property type="expression patterns" value="Expressed in pharyngeal muscle cell (C elegans) and 5 other cell types or tissues"/>
</dbReference>
<dbReference type="GO" id="GO:0016324">
    <property type="term" value="C:apical plasma membrane"/>
    <property type="evidence" value="ECO:0007669"/>
    <property type="project" value="UniProtKB-SubCell"/>
</dbReference>
<dbReference type="GO" id="GO:0005813">
    <property type="term" value="C:centrosome"/>
    <property type="evidence" value="ECO:0007669"/>
    <property type="project" value="UniProtKB-SubCell"/>
</dbReference>
<dbReference type="GO" id="GO:0060473">
    <property type="term" value="C:cortical granule"/>
    <property type="evidence" value="ECO:0000314"/>
    <property type="project" value="WormBase"/>
</dbReference>
<dbReference type="GO" id="GO:0005829">
    <property type="term" value="C:cytosol"/>
    <property type="evidence" value="ECO:0007669"/>
    <property type="project" value="UniProtKB-SubCell"/>
</dbReference>
<dbReference type="GO" id="GO:0005794">
    <property type="term" value="C:Golgi apparatus"/>
    <property type="evidence" value="ECO:0000318"/>
    <property type="project" value="GO_Central"/>
</dbReference>
<dbReference type="GO" id="GO:0000139">
    <property type="term" value="C:Golgi membrane"/>
    <property type="evidence" value="ECO:0007669"/>
    <property type="project" value="UniProtKB-SubCell"/>
</dbReference>
<dbReference type="GO" id="GO:1990676">
    <property type="term" value="C:Golgi trans cisterna membrane"/>
    <property type="evidence" value="ECO:0000314"/>
    <property type="project" value="WormBase"/>
</dbReference>
<dbReference type="GO" id="GO:0055037">
    <property type="term" value="C:recycling endosome"/>
    <property type="evidence" value="ECO:0000314"/>
    <property type="project" value="WormBase"/>
</dbReference>
<dbReference type="GO" id="GO:0055038">
    <property type="term" value="C:recycling endosome membrane"/>
    <property type="evidence" value="ECO:0007669"/>
    <property type="project" value="UniProtKB-SubCell"/>
</dbReference>
<dbReference type="GO" id="GO:0005819">
    <property type="term" value="C:spindle"/>
    <property type="evidence" value="ECO:0007669"/>
    <property type="project" value="UniProtKB-SubCell"/>
</dbReference>
<dbReference type="GO" id="GO:0030133">
    <property type="term" value="C:transport vesicle"/>
    <property type="evidence" value="ECO:0007669"/>
    <property type="project" value="UniProtKB-SubCell"/>
</dbReference>
<dbReference type="GO" id="GO:0005525">
    <property type="term" value="F:GTP binding"/>
    <property type="evidence" value="ECO:0000318"/>
    <property type="project" value="GO_Central"/>
</dbReference>
<dbReference type="GO" id="GO:0003924">
    <property type="term" value="F:GTPase activity"/>
    <property type="evidence" value="ECO:0000318"/>
    <property type="project" value="GO_Central"/>
</dbReference>
<dbReference type="GO" id="GO:0060471">
    <property type="term" value="P:cortical granule exocytosis"/>
    <property type="evidence" value="ECO:0000315"/>
    <property type="project" value="WormBase"/>
</dbReference>
<dbReference type="GO" id="GO:0030703">
    <property type="term" value="P:eggshell formation"/>
    <property type="evidence" value="ECO:0000315"/>
    <property type="project" value="WormBase"/>
</dbReference>
<dbReference type="GO" id="GO:0009792">
    <property type="term" value="P:embryo development ending in birth or egg hatching"/>
    <property type="evidence" value="ECO:0000315"/>
    <property type="project" value="WormBase"/>
</dbReference>
<dbReference type="GO" id="GO:0006887">
    <property type="term" value="P:exocytosis"/>
    <property type="evidence" value="ECO:0000318"/>
    <property type="project" value="GO_Central"/>
</dbReference>
<dbReference type="GO" id="GO:0061796">
    <property type="term" value="P:membrane addition at site of mitotic cytokinesis"/>
    <property type="evidence" value="ECO:0000315"/>
    <property type="project" value="WormBase"/>
</dbReference>
<dbReference type="GO" id="GO:0000281">
    <property type="term" value="P:mitotic cytokinesis"/>
    <property type="evidence" value="ECO:0000315"/>
    <property type="project" value="WormBase"/>
</dbReference>
<dbReference type="GO" id="GO:0015031">
    <property type="term" value="P:protein transport"/>
    <property type="evidence" value="ECO:0007669"/>
    <property type="project" value="UniProtKB-KW"/>
</dbReference>
<dbReference type="GO" id="GO:0006898">
    <property type="term" value="P:receptor-mediated endocytosis"/>
    <property type="evidence" value="ECO:0000315"/>
    <property type="project" value="WormBase"/>
</dbReference>
<dbReference type="CDD" id="cd01868">
    <property type="entry name" value="Rab11_like"/>
    <property type="match status" value="1"/>
</dbReference>
<dbReference type="FunFam" id="3.40.50.300:FF:000085">
    <property type="entry name" value="Putative ras-related protein rab-11a"/>
    <property type="match status" value="1"/>
</dbReference>
<dbReference type="Gene3D" id="3.40.50.300">
    <property type="entry name" value="P-loop containing nucleotide triphosphate hydrolases"/>
    <property type="match status" value="1"/>
</dbReference>
<dbReference type="InterPro" id="IPR027417">
    <property type="entry name" value="P-loop_NTPase"/>
</dbReference>
<dbReference type="InterPro" id="IPR050209">
    <property type="entry name" value="Rab_GTPases_membrane_traffic"/>
</dbReference>
<dbReference type="InterPro" id="IPR005225">
    <property type="entry name" value="Small_GTP-bd"/>
</dbReference>
<dbReference type="InterPro" id="IPR001806">
    <property type="entry name" value="Small_GTPase"/>
</dbReference>
<dbReference type="NCBIfam" id="TIGR00231">
    <property type="entry name" value="small_GTP"/>
    <property type="match status" value="1"/>
</dbReference>
<dbReference type="PANTHER" id="PTHR47979">
    <property type="entry name" value="DRAB11-RELATED"/>
    <property type="match status" value="1"/>
</dbReference>
<dbReference type="Pfam" id="PF00071">
    <property type="entry name" value="Ras"/>
    <property type="match status" value="1"/>
</dbReference>
<dbReference type="PRINTS" id="PR00449">
    <property type="entry name" value="RASTRNSFRMNG"/>
</dbReference>
<dbReference type="SMART" id="SM00175">
    <property type="entry name" value="RAB"/>
    <property type="match status" value="1"/>
</dbReference>
<dbReference type="SMART" id="SM00176">
    <property type="entry name" value="RAN"/>
    <property type="match status" value="1"/>
</dbReference>
<dbReference type="SMART" id="SM00173">
    <property type="entry name" value="RAS"/>
    <property type="match status" value="1"/>
</dbReference>
<dbReference type="SMART" id="SM00174">
    <property type="entry name" value="RHO"/>
    <property type="match status" value="1"/>
</dbReference>
<dbReference type="SUPFAM" id="SSF52540">
    <property type="entry name" value="P-loop containing nucleoside triphosphate hydrolases"/>
    <property type="match status" value="1"/>
</dbReference>
<dbReference type="PROSITE" id="PS51419">
    <property type="entry name" value="RAB"/>
    <property type="match status" value="1"/>
</dbReference>
<organism evidence="18">
    <name type="scientific">Caenorhabditis elegans</name>
    <dbReference type="NCBI Taxonomy" id="6239"/>
    <lineage>
        <taxon>Eukaryota</taxon>
        <taxon>Metazoa</taxon>
        <taxon>Ecdysozoa</taxon>
        <taxon>Nematoda</taxon>
        <taxon>Chromadorea</taxon>
        <taxon>Rhabditida</taxon>
        <taxon>Rhabditina</taxon>
        <taxon>Rhabditomorpha</taxon>
        <taxon>Rhabditoidea</taxon>
        <taxon>Rhabditidae</taxon>
        <taxon>Peloderinae</taxon>
        <taxon>Caenorhabditis</taxon>
    </lineage>
</organism>
<comment type="function">
    <text evidence="4 5 6 7 9 10 12 13 14">The small GTPases Rab are key regulators of intracellular membrane trafficking, from the formation of transport vesicles to their fusion with membranes (PubMed:21320697, PubMed:24843160). Rabs cycle between an inactive GDP-bound form and an active GTP-bound form that is able to recruit to membranes different set of downstream effectors directly responsible for vesicle formation, movement, tethering and fusion (PubMed:21320697, PubMed:24843160). Involved in regulating the meiotic maturation of oocytes (PubMed:18472420). Plays a role in egg shell formation, regulating exocytosis of chondroitin proteoglycans following fertilization (PubMed:18765566, PubMed:26506309). Controls cortical granule localization and targets them to the plasma membrane for exocytosis (PubMed:18765566, PubMed:22992455). Acts as a major regulator of membrane delivery during cytokinesis (PubMed:18765566, PubMed:20116245, PubMed:26506309). Regulates the cytoskeleton by facilitating astral microtubule elongation and organization during metaphase to ensure proper spindle alignment and polarity in the first embryonic cell division (PubMed:18385514). Maintains normal endoplasmic reticulum morphology during metaphase (PubMed:18385514). Involved in vesicle formation and plasma membrane repair following exposure to pore forming toxins (PubMed:21320697). Regulates endocytic recycling (PubMed:24843160). May play a role in yolk receptor endocytosis in growing oocytes (PubMed:18354496, PubMed:26506309). Plays a role in the shedding of pathogen spores from intestinal cells via its involvement in spore fusion and endocytic trafficking (PubMed:24843160).</text>
</comment>
<comment type="subunit">
    <text evidence="14">Interacts with rei-1 and rei-2. The GDP-form preferentially binds to rei-1 and rei-2.</text>
</comment>
<comment type="subcellular location">
    <subcellularLocation>
        <location evidence="7 9 12">Cytoplasmic vesicle</location>
        <location evidence="7 9 12">Secretory vesicle</location>
    </subcellularLocation>
    <subcellularLocation>
        <location evidence="8">Endosome</location>
    </subcellularLocation>
    <subcellularLocation>
        <location evidence="5 8">Cytoplasm</location>
        <location evidence="5 8">Cytoskeleton</location>
        <location evidence="5 8">Spindle</location>
    </subcellularLocation>
    <subcellularLocation>
        <location evidence="5">Cytoplasm</location>
        <location evidence="5">Cytoskeleton</location>
        <location evidence="5">Microtubule organizing center</location>
        <location evidence="5">Spindle pole body</location>
    </subcellularLocation>
    <subcellularLocation>
        <location evidence="5 8">Cytoplasm</location>
        <location evidence="5 8">Cytoskeleton</location>
        <location evidence="5 8">Microtubule organizing center</location>
        <location evidence="5 8">Centrosome</location>
    </subcellularLocation>
    <subcellularLocation>
        <location evidence="13">Apical cell membrane</location>
    </subcellularLocation>
    <subcellularLocation>
        <location evidence="13">Cytoplasm</location>
        <location evidence="13">Cytosol</location>
    </subcellularLocation>
    <subcellularLocation>
        <location evidence="5 6 7 11 14">Recycling endosome membrane</location>
        <topology evidence="15">Lipid-anchor</topology>
    </subcellularLocation>
    <subcellularLocation>
        <location evidence="7 14">Golgi apparatus membrane</location>
    </subcellularLocation>
    <subcellularLocation>
        <location evidence="5 14">Cytoplasmic granule</location>
    </subcellularLocation>
    <text evidence="5 7 8 12 13 14">Expressed in endosomal vesicles which localize to the pericentriolar region of embryos during prophase and metaphase (PubMed:19158384). Localizes along the spindle in embryos during anaphase (PubMed:19158384). Transiently accumulates on secretory vesicles before their exocytosis (PubMed:18765566). Localizes to recycling endosomes and Golgi apparatus membrane in growing oocytes (PubMed:18765566, PubMed:26506309). Translocates to cytoplasmic granules and extracellular matrix components in mature oocytes (PubMed:26506309). Accumulates on ring-shaped structures in ovulating oocytes and in early one-cell stage embryos (PubMed:18765566). Redistributes to recycling endosomes and Golgi apparatus in embryos (PubMed:26506309). Co-localizes with rei-1 at Golgi apparatus membrane in embryos (PubMed:26506309). Reycling endosomes co-localize with the endoplasmic reticulum in embryos (PubMed:18385514). Co-localizes with rab-6.1-positive vesicles near the plasma membrane until vesicle exocytosis in embryos (PubMed:22992455). Localizes to the cytosol during the meront-stage of N.parisii infection and around the resulting spores that are to be shed from intestinal cells (PubMed:24843160).</text>
</comment>
<comment type="tissue specificity">
    <text evidence="6 13">Expressed weakly in sperm, but more predominantly in oocytes (PubMed:18472420). Expressed in the intestine (PubMed:24843160).</text>
</comment>
<comment type="developmental stage">
    <text evidence="5 9 11 14">Expressed during embryogenesis (PubMed:18385514, PubMed:20116245, PubMed:26506309). Transiently expressed during cytokinesis in embryos on the ingressing furrow and at the midbody during early abscission (PubMed:20116245). Expressed during the L4 stage and young adult stage of development (PubMed:22634595).</text>
</comment>
<comment type="disruption phenotype">
    <text evidence="4 5 6 7 10 12 13">Zygotic lethal (PubMed:18765566). RNAi-mediated knockdown results in a reduced meiotic maturation rate of oocytes (PubMed:18472420). Embryos are multinucleated and osmotically sensitive with permeable and therefore defective eggshells (PubMed:18385514, PubMed:18765566). During the first cell cycle, 52% of embryos fail to extrude polar bodies, 83% of embryos display no or minimal pseudocleavage and the centrosomal-nuclear complex does not migrate to the center of embryos (PubMed:18385514). Animals display mitotic spindle alignment defects whereby in 73.9% of embryos, the P0 spindle does not rotate to the anterior-posterior axis of the embryo during anaphase, but during the metaphase to anaphase transition, the movements of the spindle are more abrupt with the spindle migrating to the posterior pole and then rebounding to the anterior-posterior axis (PubMed:18385514). In 17.4% of embryos the centrosomes are unstable and the spindle is displaced further towards the posterior pole (PubMed:18385514). Impaired localization of proteins important for establishing cell polarity such as par-2, par-3, gpr-1 and gpr-2 (PubMed:18385514). Altered microtubule organization and dynamics during metaphase including a greater distance between the growing microtubule plus ends and the posterior cortex, impeded microtubule growth with fewer growing astral microtubules reaching the cortex, and a reduced microtubule nucleation rate (PubMed:18385514). Slight defect in endoplasmic reticulum morphology whereby the large endoplasmic reticulum aggregates that normally form during metaphase and persist during anaphase, form, but do not persist during anaphase and disperse (PubMed:18385514). Mild endocytosis defect with an accumulation of the yolk protein vitellogenin in the pseudocoelom (PubMed:18354496). Impaired cortical granule (secretory vesicle) localization with granules abnormally clustered around the nuclear envelope of proximal oocytes, irregulary dispersed in the cytoplasm of oocytes and retained in the embryo following entry into the uterus (PubMed:18765566). Cortical granule exocytosis defects whereby cav-1-positive cortical granules are not tethered to the plasma membrane, but are distributed throughout the cytoplasm and accumulate around the nucleus in embryos following fertilization (PubMed:22992455). Disrupted fusion of spores, containing intracellular pathogen N.parisii, with the apical cell membrane and thus disrupted clearance from intestinal cells (PubMed:24843160). RNAi-mediated knockdown in RNAi-sensitive mutants exposed to bacterial pore-forming toxin Cry5B results in intoxification and impaired plasma membrane repair (PubMed:21320697). RNAi-mediated knockdown in the intestine results in reduced survival upon exposure to Cry5B (PubMed:21320697).</text>
</comment>
<comment type="similarity">
    <text evidence="2">Belongs to the small GTPase superfamily. Rab family.</text>
</comment>